<evidence type="ECO:0000250" key="1"/>
<evidence type="ECO:0000250" key="2">
    <source>
        <dbReference type="UniProtKB" id="P68425"/>
    </source>
</evidence>
<evidence type="ECO:0000255" key="3">
    <source>
        <dbReference type="PROSITE-ProRule" id="PRU00031"/>
    </source>
</evidence>
<evidence type="ECO:0000303" key="4">
    <source>
    </source>
</evidence>
<evidence type="ECO:0000305" key="5"/>
<evidence type="ECO:0000305" key="6">
    <source>
    </source>
</evidence>
<reference key="1">
    <citation type="journal article" date="2008" name="PLoS ONE">
        <title>Discovery of a distinct superfamily of Kunitz-type toxin (KTT) from tarantulas.</title>
        <authorList>
            <person name="Yuan C.-H."/>
            <person name="He Q.-Y."/>
            <person name="Peng K."/>
            <person name="Diao J.-B."/>
            <person name="Jiang L.-P."/>
            <person name="Tang X."/>
            <person name="Liang S.-P."/>
        </authorList>
    </citation>
    <scope>NUCLEOTIDE SEQUENCE [MRNA]</scope>
    <source>
        <tissue>Venom gland</tissue>
    </source>
</reference>
<organism>
    <name type="scientific">Cyriopagopus hainanus</name>
    <name type="common">Chinese bird spider</name>
    <name type="synonym">Haplopelma hainanum</name>
    <dbReference type="NCBI Taxonomy" id="209901"/>
    <lineage>
        <taxon>Eukaryota</taxon>
        <taxon>Metazoa</taxon>
        <taxon>Ecdysozoa</taxon>
        <taxon>Arthropoda</taxon>
        <taxon>Chelicerata</taxon>
        <taxon>Arachnida</taxon>
        <taxon>Araneae</taxon>
        <taxon>Mygalomorphae</taxon>
        <taxon>Theraphosidae</taxon>
        <taxon>Haplopelma</taxon>
    </lineage>
</organism>
<feature type="signal peptide" evidence="1">
    <location>
        <begin position="1" status="less than"/>
        <end position="22"/>
    </location>
</feature>
<feature type="chain" id="PRO_0000413823" description="Kunitz-type serine protease inhibitor HNTX-0109076">
    <location>
        <begin position="23"/>
        <end position="71"/>
    </location>
</feature>
<feature type="domain" description="BPTI/Kunitz inhibitor" evidence="3">
    <location>
        <begin position="23"/>
        <end position="68"/>
    </location>
</feature>
<feature type="site" description="May bind Kv1" evidence="1">
    <location>
        <position position="22"/>
    </location>
</feature>
<feature type="site" description="Reactive bond for chymotrypsin" evidence="1">
    <location>
        <begin position="30"/>
        <end position="31"/>
    </location>
</feature>
<feature type="disulfide bond" evidence="3">
    <location>
        <begin position="20"/>
        <end position="68"/>
    </location>
</feature>
<feature type="disulfide bond" evidence="3">
    <location>
        <begin position="43"/>
        <end position="64"/>
    </location>
</feature>
<feature type="non-terminal residue">
    <location>
        <position position="1"/>
    </location>
</feature>
<accession>P0DJ74</accession>
<sequence>DPSGSPHIRILPQETFEDICRLPSDSGDCLRFFEMWYFDGTTCTKFVYGGYGGNDNRFPTEKACMKRCAKA</sequence>
<dbReference type="SMR" id="P0DJ74"/>
<dbReference type="GO" id="GO:0005576">
    <property type="term" value="C:extracellular region"/>
    <property type="evidence" value="ECO:0007669"/>
    <property type="project" value="UniProtKB-SubCell"/>
</dbReference>
<dbReference type="GO" id="GO:0015459">
    <property type="term" value="F:potassium channel regulator activity"/>
    <property type="evidence" value="ECO:0007669"/>
    <property type="project" value="UniProtKB-KW"/>
</dbReference>
<dbReference type="GO" id="GO:0004867">
    <property type="term" value="F:serine-type endopeptidase inhibitor activity"/>
    <property type="evidence" value="ECO:0007669"/>
    <property type="project" value="UniProtKB-KW"/>
</dbReference>
<dbReference type="GO" id="GO:0090729">
    <property type="term" value="F:toxin activity"/>
    <property type="evidence" value="ECO:0007669"/>
    <property type="project" value="UniProtKB-KW"/>
</dbReference>
<dbReference type="GO" id="GO:0044562">
    <property type="term" value="P:envenomation resulting in negative regulation of voltage-gated potassium channel activity in another organism"/>
    <property type="evidence" value="ECO:0007669"/>
    <property type="project" value="UniProtKB-ARBA"/>
</dbReference>
<dbReference type="CDD" id="cd22598">
    <property type="entry name" value="Kunitz_huwentoxin"/>
    <property type="match status" value="1"/>
</dbReference>
<dbReference type="FunFam" id="4.10.410.10:FF:000020">
    <property type="entry name" value="Collagen, type VI, alpha 3"/>
    <property type="match status" value="1"/>
</dbReference>
<dbReference type="Gene3D" id="4.10.410.10">
    <property type="entry name" value="Pancreatic trypsin inhibitor Kunitz domain"/>
    <property type="match status" value="1"/>
</dbReference>
<dbReference type="InterPro" id="IPR002223">
    <property type="entry name" value="Kunitz_BPTI"/>
</dbReference>
<dbReference type="InterPro" id="IPR036880">
    <property type="entry name" value="Kunitz_BPTI_sf"/>
</dbReference>
<dbReference type="InterPro" id="IPR051388">
    <property type="entry name" value="Serpin_venom_toxin"/>
</dbReference>
<dbReference type="PANTHER" id="PTHR46751">
    <property type="entry name" value="EPPIN"/>
    <property type="match status" value="1"/>
</dbReference>
<dbReference type="PANTHER" id="PTHR46751:SF1">
    <property type="entry name" value="WAP FOUR-DISULFIDE CORE DOMAIN PROTEIN 6A"/>
    <property type="match status" value="1"/>
</dbReference>
<dbReference type="Pfam" id="PF00014">
    <property type="entry name" value="Kunitz_BPTI"/>
    <property type="match status" value="1"/>
</dbReference>
<dbReference type="PRINTS" id="PR00759">
    <property type="entry name" value="BASICPTASE"/>
</dbReference>
<dbReference type="SMART" id="SM00131">
    <property type="entry name" value="KU"/>
    <property type="match status" value="1"/>
</dbReference>
<dbReference type="SUPFAM" id="SSF57362">
    <property type="entry name" value="BPTI-like"/>
    <property type="match status" value="1"/>
</dbReference>
<dbReference type="PROSITE" id="PS50279">
    <property type="entry name" value="BPTI_KUNITZ_2"/>
    <property type="match status" value="1"/>
</dbReference>
<name>VKT76_CYRHA</name>
<keyword id="KW-1015">Disulfide bond</keyword>
<keyword id="KW-0646">Protease inhibitor</keyword>
<keyword id="KW-0964">Secreted</keyword>
<keyword id="KW-0722">Serine protease inhibitor</keyword>
<keyword id="KW-0732">Signal</keyword>
<comment type="function">
    <text evidence="2">Serine protease inhibitor that inhibits trypsin at a molar ratio of 1:1.</text>
</comment>
<comment type="subcellular location">
    <subcellularLocation>
        <location evidence="6">Secreted</location>
    </subcellularLocation>
</comment>
<comment type="tissue specificity">
    <text evidence="6">Expressed by the venom gland.</text>
</comment>
<comment type="similarity">
    <text evidence="5">Belongs to the venom Kunitz-type family. 03 (sub-Kunitz) subfamily.</text>
</comment>
<proteinExistence type="evidence at transcript level"/>
<protein>
    <recommendedName>
        <fullName evidence="4">Kunitz-type serine protease inhibitor HNTX-0109076</fullName>
    </recommendedName>
</protein>